<accession>Q9ZLM1</accession>
<evidence type="ECO:0000255" key="1">
    <source>
        <dbReference type="HAMAP-Rule" id="MF_01588"/>
    </source>
</evidence>
<sequence length="656" mass="74156">MIKSQKEYLERIEYLNTLSHHYYNLDEPIVSDAVYDELYQELKAYEEENPNRIQANSPTQKVGATATNEFSKNPHLMRMWSLDDVFNQNELRAWLQRILKVYPNASFVCSPKLDGVSLNLLYQHGKLISATTRGNGLEGELVTNNAKHIANIPHSIAYNGEIEIRGEVIISKEDFDALNKERLNANEPLFANPRNAASGSLRQLDSNITKKRKLQFIPWGVGKHSLHFLRFKECLDFIVSLGFSAIQYLSLNKNHQEIEENYHTLIREREGFFALLDGMVIVVDELDIQKELGYTQKSPKFACAYKFPALEKHTKIVGVINQVGRSGAITPVALLEPVEIAGAMVNRATLHNYSEIEKKNIMLNDRVVVIRSGDVIPKIIKPLESYRDGSQQKIMRPKVCPICSHELLCEEIFTYCQNLNCPARLKESLIHFASKDALNIQGLGDKVIEQLFEEKLIFNALDLYALKLEDLMRLDKFKIKKAQNLLDAIQKSKNPPLWRLINALGIEHIGKGASKTLAKYGLNVLEKSEAEFLEMEGFGVEMAHSLVNFYASNQEFIRSLFELLNPKSSDTAEEKQKSSSVFSDKTIVLTGTLSKPRQEYAQMLENLGAKIASSVSAKTDFLIAGENAGSKLALAQKHGVSVLNEEELLKRLKELD</sequence>
<name>DNLJ_HELPJ</name>
<organism>
    <name type="scientific">Helicobacter pylori (strain J99 / ATCC 700824)</name>
    <name type="common">Campylobacter pylori J99</name>
    <dbReference type="NCBI Taxonomy" id="85963"/>
    <lineage>
        <taxon>Bacteria</taxon>
        <taxon>Pseudomonadati</taxon>
        <taxon>Campylobacterota</taxon>
        <taxon>Epsilonproteobacteria</taxon>
        <taxon>Campylobacterales</taxon>
        <taxon>Helicobacteraceae</taxon>
        <taxon>Helicobacter</taxon>
    </lineage>
</organism>
<reference key="1">
    <citation type="journal article" date="1999" name="Nature">
        <title>Genomic sequence comparison of two unrelated isolates of the human gastric pathogen Helicobacter pylori.</title>
        <authorList>
            <person name="Alm R.A."/>
            <person name="Ling L.-S.L."/>
            <person name="Moir D.T."/>
            <person name="King B.L."/>
            <person name="Brown E.D."/>
            <person name="Doig P.C."/>
            <person name="Smith D.R."/>
            <person name="Noonan B."/>
            <person name="Guild B.C."/>
            <person name="deJonge B.L."/>
            <person name="Carmel G."/>
            <person name="Tummino P.J."/>
            <person name="Caruso A."/>
            <person name="Uria-Nickelsen M."/>
            <person name="Mills D.M."/>
            <person name="Ives C."/>
            <person name="Gibson R."/>
            <person name="Merberg D."/>
            <person name="Mills S.D."/>
            <person name="Jiang Q."/>
            <person name="Taylor D.E."/>
            <person name="Vovis G.F."/>
            <person name="Trust T.J."/>
        </authorList>
    </citation>
    <scope>NUCLEOTIDE SEQUENCE [LARGE SCALE GENOMIC DNA]</scope>
    <source>
        <strain>J99 / ATCC 700824</strain>
    </source>
</reference>
<protein>
    <recommendedName>
        <fullName evidence="1">DNA ligase</fullName>
        <ecNumber evidence="1">6.5.1.2</ecNumber>
    </recommendedName>
    <alternativeName>
        <fullName evidence="1">Polydeoxyribonucleotide synthase [NAD(+)]</fullName>
    </alternativeName>
</protein>
<feature type="chain" id="PRO_0000161748" description="DNA ligase">
    <location>
        <begin position="1"/>
        <end position="656"/>
    </location>
</feature>
<feature type="domain" description="BRCT" evidence="1">
    <location>
        <begin position="577"/>
        <end position="656"/>
    </location>
</feature>
<feature type="active site" description="N6-AMP-lysine intermediate" evidence="1">
    <location>
        <position position="112"/>
    </location>
</feature>
<feature type="binding site" evidence="1">
    <location>
        <begin position="32"/>
        <end position="36"/>
    </location>
    <ligand>
        <name>NAD(+)</name>
        <dbReference type="ChEBI" id="CHEBI:57540"/>
    </ligand>
</feature>
<feature type="binding site" evidence="1">
    <location>
        <begin position="81"/>
        <end position="82"/>
    </location>
    <ligand>
        <name>NAD(+)</name>
        <dbReference type="ChEBI" id="CHEBI:57540"/>
    </ligand>
</feature>
<feature type="binding site" evidence="1">
    <location>
        <position position="133"/>
    </location>
    <ligand>
        <name>NAD(+)</name>
        <dbReference type="ChEBI" id="CHEBI:57540"/>
    </ligand>
</feature>
<feature type="binding site" evidence="1">
    <location>
        <position position="167"/>
    </location>
    <ligand>
        <name>NAD(+)</name>
        <dbReference type="ChEBI" id="CHEBI:57540"/>
    </ligand>
</feature>
<feature type="binding site" evidence="1">
    <location>
        <position position="306"/>
    </location>
    <ligand>
        <name>NAD(+)</name>
        <dbReference type="ChEBI" id="CHEBI:57540"/>
    </ligand>
</feature>
<feature type="binding site" evidence="1">
    <location>
        <position position="400"/>
    </location>
    <ligand>
        <name>Zn(2+)</name>
        <dbReference type="ChEBI" id="CHEBI:29105"/>
    </ligand>
</feature>
<feature type="binding site" evidence="1">
    <location>
        <position position="403"/>
    </location>
    <ligand>
        <name>Zn(2+)</name>
        <dbReference type="ChEBI" id="CHEBI:29105"/>
    </ligand>
</feature>
<feature type="binding site" evidence="1">
    <location>
        <position position="416"/>
    </location>
    <ligand>
        <name>Zn(2+)</name>
        <dbReference type="ChEBI" id="CHEBI:29105"/>
    </ligand>
</feature>
<feature type="binding site" evidence="1">
    <location>
        <position position="421"/>
    </location>
    <ligand>
        <name>Zn(2+)</name>
        <dbReference type="ChEBI" id="CHEBI:29105"/>
    </ligand>
</feature>
<gene>
    <name evidence="1" type="primary">ligA</name>
    <name type="synonym">lig</name>
    <name type="ordered locus">jhp_0558</name>
</gene>
<keyword id="KW-0227">DNA damage</keyword>
<keyword id="KW-0234">DNA repair</keyword>
<keyword id="KW-0235">DNA replication</keyword>
<keyword id="KW-0436">Ligase</keyword>
<keyword id="KW-0460">Magnesium</keyword>
<keyword id="KW-0464">Manganese</keyword>
<keyword id="KW-0479">Metal-binding</keyword>
<keyword id="KW-0520">NAD</keyword>
<keyword id="KW-0862">Zinc</keyword>
<comment type="function">
    <text>DNA ligase that catalyzes the formation of phosphodiester linkages between 5'-phosphoryl and 3'-hydroxyl groups in double-stranded DNA using NAD as a coenzyme and as the energy source for the reaction. It is essential for DNA replication and repair of damaged DNA.</text>
</comment>
<comment type="catalytic activity">
    <reaction evidence="1">
        <text>NAD(+) + (deoxyribonucleotide)n-3'-hydroxyl + 5'-phospho-(deoxyribonucleotide)m = (deoxyribonucleotide)n+m + AMP + beta-nicotinamide D-nucleotide.</text>
        <dbReference type="EC" id="6.5.1.2"/>
    </reaction>
</comment>
<comment type="cofactor">
    <cofactor evidence="1">
        <name>Mg(2+)</name>
        <dbReference type="ChEBI" id="CHEBI:18420"/>
    </cofactor>
    <cofactor evidence="1">
        <name>Mn(2+)</name>
        <dbReference type="ChEBI" id="CHEBI:29035"/>
    </cofactor>
</comment>
<comment type="similarity">
    <text evidence="1">Belongs to the NAD-dependent DNA ligase family. LigA subfamily.</text>
</comment>
<dbReference type="EC" id="6.5.1.2" evidence="1"/>
<dbReference type="EMBL" id="AE001439">
    <property type="protein sequence ID" value="AAD06141.1"/>
    <property type="molecule type" value="Genomic_DNA"/>
</dbReference>
<dbReference type="PIR" id="A71916">
    <property type="entry name" value="A71916"/>
</dbReference>
<dbReference type="RefSeq" id="WP_000597619.1">
    <property type="nucleotide sequence ID" value="NC_000921.1"/>
</dbReference>
<dbReference type="SMR" id="Q9ZLM1"/>
<dbReference type="KEGG" id="hpj:jhp_0558"/>
<dbReference type="PATRIC" id="fig|85963.30.peg.432"/>
<dbReference type="eggNOG" id="COG0272">
    <property type="taxonomic scope" value="Bacteria"/>
</dbReference>
<dbReference type="Proteomes" id="UP000000804">
    <property type="component" value="Chromosome"/>
</dbReference>
<dbReference type="GO" id="GO:0005829">
    <property type="term" value="C:cytosol"/>
    <property type="evidence" value="ECO:0007669"/>
    <property type="project" value="TreeGrafter"/>
</dbReference>
<dbReference type="GO" id="GO:0003677">
    <property type="term" value="F:DNA binding"/>
    <property type="evidence" value="ECO:0007669"/>
    <property type="project" value="InterPro"/>
</dbReference>
<dbReference type="GO" id="GO:0003911">
    <property type="term" value="F:DNA ligase (NAD+) activity"/>
    <property type="evidence" value="ECO:0007669"/>
    <property type="project" value="UniProtKB-UniRule"/>
</dbReference>
<dbReference type="GO" id="GO:0046872">
    <property type="term" value="F:metal ion binding"/>
    <property type="evidence" value="ECO:0007669"/>
    <property type="project" value="UniProtKB-KW"/>
</dbReference>
<dbReference type="GO" id="GO:0006281">
    <property type="term" value="P:DNA repair"/>
    <property type="evidence" value="ECO:0007669"/>
    <property type="project" value="UniProtKB-KW"/>
</dbReference>
<dbReference type="GO" id="GO:0006260">
    <property type="term" value="P:DNA replication"/>
    <property type="evidence" value="ECO:0007669"/>
    <property type="project" value="UniProtKB-KW"/>
</dbReference>
<dbReference type="CDD" id="cd17748">
    <property type="entry name" value="BRCT_DNA_ligase_like"/>
    <property type="match status" value="1"/>
</dbReference>
<dbReference type="CDD" id="cd00114">
    <property type="entry name" value="LIGANc"/>
    <property type="match status" value="1"/>
</dbReference>
<dbReference type="FunFam" id="1.10.150.20:FF:000007">
    <property type="entry name" value="DNA ligase"/>
    <property type="match status" value="1"/>
</dbReference>
<dbReference type="FunFam" id="2.40.50.140:FF:000012">
    <property type="entry name" value="DNA ligase"/>
    <property type="match status" value="1"/>
</dbReference>
<dbReference type="FunFam" id="3.30.470.30:FF:000034">
    <property type="entry name" value="DNA ligase"/>
    <property type="match status" value="1"/>
</dbReference>
<dbReference type="FunFam" id="3.40.50.10190:FF:000069">
    <property type="entry name" value="DNA ligase"/>
    <property type="match status" value="1"/>
</dbReference>
<dbReference type="Gene3D" id="1.10.150.20">
    <property type="entry name" value="5' to 3' exonuclease, C-terminal subdomain"/>
    <property type="match status" value="2"/>
</dbReference>
<dbReference type="Gene3D" id="3.40.50.10190">
    <property type="entry name" value="BRCT domain"/>
    <property type="match status" value="1"/>
</dbReference>
<dbReference type="Gene3D" id="3.30.470.30">
    <property type="entry name" value="DNA ligase/mRNA capping enzyme"/>
    <property type="match status" value="1"/>
</dbReference>
<dbReference type="Gene3D" id="1.10.287.610">
    <property type="entry name" value="Helix hairpin bin"/>
    <property type="match status" value="1"/>
</dbReference>
<dbReference type="Gene3D" id="2.40.50.140">
    <property type="entry name" value="Nucleic acid-binding proteins"/>
    <property type="match status" value="1"/>
</dbReference>
<dbReference type="HAMAP" id="MF_01588">
    <property type="entry name" value="DNA_ligase_A"/>
    <property type="match status" value="1"/>
</dbReference>
<dbReference type="InterPro" id="IPR001357">
    <property type="entry name" value="BRCT_dom"/>
</dbReference>
<dbReference type="InterPro" id="IPR036420">
    <property type="entry name" value="BRCT_dom_sf"/>
</dbReference>
<dbReference type="InterPro" id="IPR001679">
    <property type="entry name" value="DNA_ligase"/>
</dbReference>
<dbReference type="InterPro" id="IPR018239">
    <property type="entry name" value="DNA_ligase_AS"/>
</dbReference>
<dbReference type="InterPro" id="IPR033136">
    <property type="entry name" value="DNA_ligase_CS"/>
</dbReference>
<dbReference type="InterPro" id="IPR013839">
    <property type="entry name" value="DNAligase_adenylation"/>
</dbReference>
<dbReference type="InterPro" id="IPR013840">
    <property type="entry name" value="DNAligase_N"/>
</dbReference>
<dbReference type="InterPro" id="IPR003583">
    <property type="entry name" value="Hlx-hairpin-Hlx_DNA-bd_motif"/>
</dbReference>
<dbReference type="InterPro" id="IPR012340">
    <property type="entry name" value="NA-bd_OB-fold"/>
</dbReference>
<dbReference type="InterPro" id="IPR004150">
    <property type="entry name" value="NAD_DNA_ligase_OB"/>
</dbReference>
<dbReference type="InterPro" id="IPR010994">
    <property type="entry name" value="RuvA_2-like"/>
</dbReference>
<dbReference type="NCBIfam" id="TIGR00575">
    <property type="entry name" value="dnlj"/>
    <property type="match status" value="1"/>
</dbReference>
<dbReference type="NCBIfam" id="NF005932">
    <property type="entry name" value="PRK07956.1"/>
    <property type="match status" value="1"/>
</dbReference>
<dbReference type="PANTHER" id="PTHR23389">
    <property type="entry name" value="CHROMOSOME TRANSMISSION FIDELITY FACTOR 18"/>
    <property type="match status" value="1"/>
</dbReference>
<dbReference type="PANTHER" id="PTHR23389:SF9">
    <property type="entry name" value="DNA LIGASE"/>
    <property type="match status" value="1"/>
</dbReference>
<dbReference type="Pfam" id="PF00533">
    <property type="entry name" value="BRCT"/>
    <property type="match status" value="1"/>
</dbReference>
<dbReference type="Pfam" id="PF01653">
    <property type="entry name" value="DNA_ligase_aden"/>
    <property type="match status" value="1"/>
</dbReference>
<dbReference type="Pfam" id="PF03120">
    <property type="entry name" value="DNA_ligase_OB"/>
    <property type="match status" value="1"/>
</dbReference>
<dbReference type="PIRSF" id="PIRSF001604">
    <property type="entry name" value="LigA"/>
    <property type="match status" value="1"/>
</dbReference>
<dbReference type="SMART" id="SM00292">
    <property type="entry name" value="BRCT"/>
    <property type="match status" value="1"/>
</dbReference>
<dbReference type="SMART" id="SM00278">
    <property type="entry name" value="HhH1"/>
    <property type="match status" value="3"/>
</dbReference>
<dbReference type="SMART" id="SM00532">
    <property type="entry name" value="LIGANc"/>
    <property type="match status" value="1"/>
</dbReference>
<dbReference type="SUPFAM" id="SSF52113">
    <property type="entry name" value="BRCT domain"/>
    <property type="match status" value="1"/>
</dbReference>
<dbReference type="SUPFAM" id="SSF56091">
    <property type="entry name" value="DNA ligase/mRNA capping enzyme, catalytic domain"/>
    <property type="match status" value="1"/>
</dbReference>
<dbReference type="SUPFAM" id="SSF50249">
    <property type="entry name" value="Nucleic acid-binding proteins"/>
    <property type="match status" value="1"/>
</dbReference>
<dbReference type="SUPFAM" id="SSF47781">
    <property type="entry name" value="RuvA domain 2-like"/>
    <property type="match status" value="1"/>
</dbReference>
<dbReference type="PROSITE" id="PS50172">
    <property type="entry name" value="BRCT"/>
    <property type="match status" value="1"/>
</dbReference>
<dbReference type="PROSITE" id="PS01055">
    <property type="entry name" value="DNA_LIGASE_N1"/>
    <property type="match status" value="1"/>
</dbReference>
<dbReference type="PROSITE" id="PS01056">
    <property type="entry name" value="DNA_LIGASE_N2"/>
    <property type="match status" value="1"/>
</dbReference>
<proteinExistence type="inferred from homology"/>